<name>PHS_MYCBT</name>
<proteinExistence type="inferred from homology"/>
<sequence>MAVLTDEQVDAALHDLNGWQRAGGVLRRSIKFPTFMAGIDAVRRVAERAEEVNHHPDIDIRWRTVTFALVTHAVGGITENDIAMAHDIDAMFGA</sequence>
<feature type="chain" id="PRO_1000192918" description="Putative pterin-4-alpha-carbinolamine dehydratase">
    <location>
        <begin position="1"/>
        <end position="94"/>
    </location>
</feature>
<keyword id="KW-0456">Lyase</keyword>
<evidence type="ECO:0000255" key="1">
    <source>
        <dbReference type="HAMAP-Rule" id="MF_00434"/>
    </source>
</evidence>
<accession>C1AMF4</accession>
<protein>
    <recommendedName>
        <fullName evidence="1">Putative pterin-4-alpha-carbinolamine dehydratase</fullName>
        <shortName evidence="1">PHS</shortName>
        <ecNumber evidence="1">4.2.1.96</ecNumber>
    </recommendedName>
    <alternativeName>
        <fullName evidence="1">4-alpha-hydroxy-tetrahydropterin dehydratase</fullName>
    </alternativeName>
    <alternativeName>
        <fullName evidence="1">Pterin carbinolamine dehydratase</fullName>
        <shortName evidence="1">PCD</shortName>
    </alternativeName>
</protein>
<dbReference type="EC" id="4.2.1.96" evidence="1"/>
<dbReference type="EMBL" id="AP010918">
    <property type="protein sequence ID" value="BAH25483.1"/>
    <property type="molecule type" value="Genomic_DNA"/>
</dbReference>
<dbReference type="RefSeq" id="WP_003406082.1">
    <property type="nucleotide sequence ID" value="NZ_CP014566.1"/>
</dbReference>
<dbReference type="SMR" id="C1AMF4"/>
<dbReference type="KEGG" id="mbt:JTY_1194"/>
<dbReference type="HOGENOM" id="CLU_081974_4_3_11"/>
<dbReference type="GO" id="GO:0008124">
    <property type="term" value="F:4-alpha-hydroxytetrahydrobiopterin dehydratase activity"/>
    <property type="evidence" value="ECO:0007669"/>
    <property type="project" value="UniProtKB-UniRule"/>
</dbReference>
<dbReference type="GO" id="GO:0006729">
    <property type="term" value="P:tetrahydrobiopterin biosynthetic process"/>
    <property type="evidence" value="ECO:0007669"/>
    <property type="project" value="InterPro"/>
</dbReference>
<dbReference type="CDD" id="cd00488">
    <property type="entry name" value="PCD_DCoH"/>
    <property type="match status" value="1"/>
</dbReference>
<dbReference type="Gene3D" id="3.30.1360.20">
    <property type="entry name" value="Transcriptional coactivator/pterin dehydratase"/>
    <property type="match status" value="1"/>
</dbReference>
<dbReference type="HAMAP" id="MF_00434">
    <property type="entry name" value="Pterin_4_alpha"/>
    <property type="match status" value="1"/>
</dbReference>
<dbReference type="InterPro" id="IPR036428">
    <property type="entry name" value="PCD_sf"/>
</dbReference>
<dbReference type="InterPro" id="IPR001533">
    <property type="entry name" value="Pterin_deHydtase"/>
</dbReference>
<dbReference type="NCBIfam" id="NF002017">
    <property type="entry name" value="PRK00823.1-2"/>
    <property type="match status" value="1"/>
</dbReference>
<dbReference type="PANTHER" id="PTHR12599">
    <property type="entry name" value="PTERIN-4-ALPHA-CARBINOLAMINE DEHYDRATASE"/>
    <property type="match status" value="1"/>
</dbReference>
<dbReference type="PANTHER" id="PTHR12599:SF0">
    <property type="entry name" value="PTERIN-4-ALPHA-CARBINOLAMINE DEHYDRATASE"/>
    <property type="match status" value="1"/>
</dbReference>
<dbReference type="Pfam" id="PF01329">
    <property type="entry name" value="Pterin_4a"/>
    <property type="match status" value="1"/>
</dbReference>
<dbReference type="SUPFAM" id="SSF55248">
    <property type="entry name" value="PCD-like"/>
    <property type="match status" value="1"/>
</dbReference>
<reference key="1">
    <citation type="journal article" date="2009" name="Vaccine">
        <title>Whole genome sequence analysis of Mycobacterium bovis bacillus Calmette-Guerin (BCG) Tokyo 172: a comparative study of BCG vaccine substrains.</title>
        <authorList>
            <person name="Seki M."/>
            <person name="Honda I."/>
            <person name="Fujita I."/>
            <person name="Yano I."/>
            <person name="Yamamoto S."/>
            <person name="Koyama A."/>
        </authorList>
    </citation>
    <scope>NUCLEOTIDE SEQUENCE [LARGE SCALE GENOMIC DNA]</scope>
    <source>
        <strain>BCG / Tokyo 172 / ATCC 35737 / TMC 1019</strain>
    </source>
</reference>
<comment type="catalytic activity">
    <reaction evidence="1">
        <text>(4aS,6R)-4a-hydroxy-L-erythro-5,6,7,8-tetrahydrobiopterin = (6R)-L-erythro-6,7-dihydrobiopterin + H2O</text>
        <dbReference type="Rhea" id="RHEA:11920"/>
        <dbReference type="ChEBI" id="CHEBI:15377"/>
        <dbReference type="ChEBI" id="CHEBI:15642"/>
        <dbReference type="ChEBI" id="CHEBI:43120"/>
        <dbReference type="EC" id="4.2.1.96"/>
    </reaction>
</comment>
<comment type="similarity">
    <text evidence="1">Belongs to the pterin-4-alpha-carbinolamine dehydratase family.</text>
</comment>
<organism>
    <name type="scientific">Mycobacterium bovis (strain BCG / Tokyo 172 / ATCC 35737 / TMC 1019)</name>
    <dbReference type="NCBI Taxonomy" id="561275"/>
    <lineage>
        <taxon>Bacteria</taxon>
        <taxon>Bacillati</taxon>
        <taxon>Actinomycetota</taxon>
        <taxon>Actinomycetes</taxon>
        <taxon>Mycobacteriales</taxon>
        <taxon>Mycobacteriaceae</taxon>
        <taxon>Mycobacterium</taxon>
        <taxon>Mycobacterium tuberculosis complex</taxon>
    </lineage>
</organism>
<gene>
    <name type="ordered locus">JTY_1194</name>
</gene>